<name>DEOB_SALEP</name>
<protein>
    <recommendedName>
        <fullName evidence="1">Phosphopentomutase</fullName>
        <ecNumber evidence="1">5.4.2.7</ecNumber>
    </recommendedName>
    <alternativeName>
        <fullName evidence="1">Phosphodeoxyribomutase</fullName>
    </alternativeName>
</protein>
<gene>
    <name evidence="1" type="primary">deoB</name>
    <name type="ordered locus">SEN4330</name>
</gene>
<reference key="1">
    <citation type="journal article" date="2008" name="Genome Res.">
        <title>Comparative genome analysis of Salmonella enteritidis PT4 and Salmonella gallinarum 287/91 provides insights into evolutionary and host adaptation pathways.</title>
        <authorList>
            <person name="Thomson N.R."/>
            <person name="Clayton D.J."/>
            <person name="Windhorst D."/>
            <person name="Vernikos G."/>
            <person name="Davidson S."/>
            <person name="Churcher C."/>
            <person name="Quail M.A."/>
            <person name="Stevens M."/>
            <person name="Jones M.A."/>
            <person name="Watson M."/>
            <person name="Barron A."/>
            <person name="Layton A."/>
            <person name="Pickard D."/>
            <person name="Kingsley R.A."/>
            <person name="Bignell A."/>
            <person name="Clark L."/>
            <person name="Harris B."/>
            <person name="Ormond D."/>
            <person name="Abdellah Z."/>
            <person name="Brooks K."/>
            <person name="Cherevach I."/>
            <person name="Chillingworth T."/>
            <person name="Woodward J."/>
            <person name="Norberczak H."/>
            <person name="Lord A."/>
            <person name="Arrowsmith C."/>
            <person name="Jagels K."/>
            <person name="Moule S."/>
            <person name="Mungall K."/>
            <person name="Saunders M."/>
            <person name="Whitehead S."/>
            <person name="Chabalgoity J.A."/>
            <person name="Maskell D."/>
            <person name="Humphreys T."/>
            <person name="Roberts M."/>
            <person name="Barrow P.A."/>
            <person name="Dougan G."/>
            <person name="Parkhill J."/>
        </authorList>
    </citation>
    <scope>NUCLEOTIDE SEQUENCE [LARGE SCALE GENOMIC DNA]</scope>
    <source>
        <strain>P125109</strain>
    </source>
</reference>
<evidence type="ECO:0000255" key="1">
    <source>
        <dbReference type="HAMAP-Rule" id="MF_00740"/>
    </source>
</evidence>
<sequence>MKRAFIMVLDSFGIGATEDADRFGDVGSDTLGHIAEACAKGEADNGRKGPLNLPNLTRLGLVKAHEGSTGKIAAGMDGNADVIGAYAWAHELSSGKDTPSGHWEIAGVPVLFDWGYFSDHENSFPQELLDKLVKRANLPGYLGNCHSSGTVILDQLGEEHMKTGKPIFYTSADSVFQIACHEETFGLDKLYELCEIAREELTEGGYNIGRVIARPFIGDKAGNFQRTGNRHDLAVEPPAPTVLQKLVDEKQGHVVSVGKIADIYANCGITKKVKATGLDALFDATLKEMKEAGDKTIVFTNFVDFDSSWGHRRDIAGYAAGLELFDRRLPELMELVGEDDILILTADHGCDPSWTGTDHTREHIPVLIYGPKVKPGSLGHRETFADIGQTLATYFGTSPMDYGKNML</sequence>
<dbReference type="EC" id="5.4.2.7" evidence="1"/>
<dbReference type="EMBL" id="AM933172">
    <property type="protein sequence ID" value="CAR35882.1"/>
    <property type="molecule type" value="Genomic_DNA"/>
</dbReference>
<dbReference type="RefSeq" id="WP_000816454.1">
    <property type="nucleotide sequence ID" value="NC_011294.1"/>
</dbReference>
<dbReference type="SMR" id="B5R2J8"/>
<dbReference type="KEGG" id="set:SEN4330"/>
<dbReference type="HOGENOM" id="CLU_053861_0_0_6"/>
<dbReference type="UniPathway" id="UPA00002">
    <property type="reaction ID" value="UER00467"/>
</dbReference>
<dbReference type="Proteomes" id="UP000000613">
    <property type="component" value="Chromosome"/>
</dbReference>
<dbReference type="GO" id="GO:0005829">
    <property type="term" value="C:cytosol"/>
    <property type="evidence" value="ECO:0007669"/>
    <property type="project" value="TreeGrafter"/>
</dbReference>
<dbReference type="GO" id="GO:0000287">
    <property type="term" value="F:magnesium ion binding"/>
    <property type="evidence" value="ECO:0007669"/>
    <property type="project" value="InterPro"/>
</dbReference>
<dbReference type="GO" id="GO:0030145">
    <property type="term" value="F:manganese ion binding"/>
    <property type="evidence" value="ECO:0007669"/>
    <property type="project" value="UniProtKB-UniRule"/>
</dbReference>
<dbReference type="GO" id="GO:0008973">
    <property type="term" value="F:phosphopentomutase activity"/>
    <property type="evidence" value="ECO:0007669"/>
    <property type="project" value="UniProtKB-UniRule"/>
</dbReference>
<dbReference type="GO" id="GO:0006018">
    <property type="term" value="P:2-deoxyribose 1-phosphate catabolic process"/>
    <property type="evidence" value="ECO:0007669"/>
    <property type="project" value="UniProtKB-UniRule"/>
</dbReference>
<dbReference type="GO" id="GO:0006015">
    <property type="term" value="P:5-phosphoribose 1-diphosphate biosynthetic process"/>
    <property type="evidence" value="ECO:0007669"/>
    <property type="project" value="UniProtKB-UniPathway"/>
</dbReference>
<dbReference type="GO" id="GO:0043094">
    <property type="term" value="P:metabolic compound salvage"/>
    <property type="evidence" value="ECO:0007669"/>
    <property type="project" value="InterPro"/>
</dbReference>
<dbReference type="GO" id="GO:0009117">
    <property type="term" value="P:nucleotide metabolic process"/>
    <property type="evidence" value="ECO:0007669"/>
    <property type="project" value="InterPro"/>
</dbReference>
<dbReference type="CDD" id="cd16009">
    <property type="entry name" value="PPM"/>
    <property type="match status" value="1"/>
</dbReference>
<dbReference type="FunFam" id="3.30.70.1250:FF:000001">
    <property type="entry name" value="Phosphopentomutase"/>
    <property type="match status" value="1"/>
</dbReference>
<dbReference type="Gene3D" id="3.40.720.10">
    <property type="entry name" value="Alkaline Phosphatase, subunit A"/>
    <property type="match status" value="1"/>
</dbReference>
<dbReference type="Gene3D" id="3.30.70.1250">
    <property type="entry name" value="Phosphopentomutase"/>
    <property type="match status" value="1"/>
</dbReference>
<dbReference type="HAMAP" id="MF_00740">
    <property type="entry name" value="Phosphopentomut"/>
    <property type="match status" value="1"/>
</dbReference>
<dbReference type="InterPro" id="IPR017850">
    <property type="entry name" value="Alkaline_phosphatase_core_sf"/>
</dbReference>
<dbReference type="InterPro" id="IPR010045">
    <property type="entry name" value="DeoB"/>
</dbReference>
<dbReference type="InterPro" id="IPR006124">
    <property type="entry name" value="Metalloenzyme"/>
</dbReference>
<dbReference type="InterPro" id="IPR024052">
    <property type="entry name" value="Phosphopentomutase_DeoB_cap_sf"/>
</dbReference>
<dbReference type="NCBIfam" id="TIGR01696">
    <property type="entry name" value="deoB"/>
    <property type="match status" value="1"/>
</dbReference>
<dbReference type="NCBIfam" id="NF003766">
    <property type="entry name" value="PRK05362.1"/>
    <property type="match status" value="1"/>
</dbReference>
<dbReference type="PANTHER" id="PTHR21110">
    <property type="entry name" value="PHOSPHOPENTOMUTASE"/>
    <property type="match status" value="1"/>
</dbReference>
<dbReference type="PANTHER" id="PTHR21110:SF0">
    <property type="entry name" value="PHOSPHOPENTOMUTASE"/>
    <property type="match status" value="1"/>
</dbReference>
<dbReference type="Pfam" id="PF01676">
    <property type="entry name" value="Metalloenzyme"/>
    <property type="match status" value="1"/>
</dbReference>
<dbReference type="PIRSF" id="PIRSF001491">
    <property type="entry name" value="Ppentomutase"/>
    <property type="match status" value="1"/>
</dbReference>
<dbReference type="SUPFAM" id="SSF53649">
    <property type="entry name" value="Alkaline phosphatase-like"/>
    <property type="match status" value="1"/>
</dbReference>
<dbReference type="SUPFAM" id="SSF143856">
    <property type="entry name" value="DeoB insert domain-like"/>
    <property type="match status" value="1"/>
</dbReference>
<accession>B5R2J8</accession>
<comment type="function">
    <text evidence="1">Isomerase that catalyzes the conversion of deoxy-ribose 1-phosphate (dRib-1-P) and ribose 1-phosphate (Rib-1-P) to deoxy-ribose 5-phosphate (dRib-5-P) and ribose 5-phosphate (Rib-5-P), respectively.</text>
</comment>
<comment type="catalytic activity">
    <reaction evidence="1">
        <text>2-deoxy-alpha-D-ribose 1-phosphate = 2-deoxy-D-ribose 5-phosphate</text>
        <dbReference type="Rhea" id="RHEA:27658"/>
        <dbReference type="ChEBI" id="CHEBI:57259"/>
        <dbReference type="ChEBI" id="CHEBI:62877"/>
        <dbReference type="EC" id="5.4.2.7"/>
    </reaction>
</comment>
<comment type="catalytic activity">
    <reaction evidence="1">
        <text>alpha-D-ribose 1-phosphate = D-ribose 5-phosphate</text>
        <dbReference type="Rhea" id="RHEA:18793"/>
        <dbReference type="ChEBI" id="CHEBI:57720"/>
        <dbReference type="ChEBI" id="CHEBI:78346"/>
        <dbReference type="EC" id="5.4.2.7"/>
    </reaction>
</comment>
<comment type="cofactor">
    <cofactor evidence="1">
        <name>Mn(2+)</name>
        <dbReference type="ChEBI" id="CHEBI:29035"/>
    </cofactor>
    <text evidence="1">Binds 2 manganese ions.</text>
</comment>
<comment type="pathway">
    <text evidence="1">Carbohydrate degradation; 2-deoxy-D-ribose 1-phosphate degradation; D-glyceraldehyde 3-phosphate and acetaldehyde from 2-deoxy-alpha-D-ribose 1-phosphate: step 1/2.</text>
</comment>
<comment type="subcellular location">
    <subcellularLocation>
        <location evidence="1">Cytoplasm</location>
    </subcellularLocation>
</comment>
<comment type="similarity">
    <text evidence="1">Belongs to the phosphopentomutase family.</text>
</comment>
<keyword id="KW-0963">Cytoplasm</keyword>
<keyword id="KW-0413">Isomerase</keyword>
<keyword id="KW-0464">Manganese</keyword>
<keyword id="KW-0479">Metal-binding</keyword>
<proteinExistence type="inferred from homology"/>
<organism>
    <name type="scientific">Salmonella enteritidis PT4 (strain P125109)</name>
    <dbReference type="NCBI Taxonomy" id="550537"/>
    <lineage>
        <taxon>Bacteria</taxon>
        <taxon>Pseudomonadati</taxon>
        <taxon>Pseudomonadota</taxon>
        <taxon>Gammaproteobacteria</taxon>
        <taxon>Enterobacterales</taxon>
        <taxon>Enterobacteriaceae</taxon>
        <taxon>Salmonella</taxon>
    </lineage>
</organism>
<feature type="chain" id="PRO_1000133094" description="Phosphopentomutase">
    <location>
        <begin position="1"/>
        <end position="407"/>
    </location>
</feature>
<feature type="binding site" evidence="1">
    <location>
        <position position="10"/>
    </location>
    <ligand>
        <name>Mn(2+)</name>
        <dbReference type="ChEBI" id="CHEBI:29035"/>
        <label>1</label>
    </ligand>
</feature>
<feature type="binding site" evidence="1">
    <location>
        <position position="306"/>
    </location>
    <ligand>
        <name>Mn(2+)</name>
        <dbReference type="ChEBI" id="CHEBI:29035"/>
        <label>2</label>
    </ligand>
</feature>
<feature type="binding site" evidence="1">
    <location>
        <position position="311"/>
    </location>
    <ligand>
        <name>Mn(2+)</name>
        <dbReference type="ChEBI" id="CHEBI:29035"/>
        <label>2</label>
    </ligand>
</feature>
<feature type="binding site" evidence="1">
    <location>
        <position position="347"/>
    </location>
    <ligand>
        <name>Mn(2+)</name>
        <dbReference type="ChEBI" id="CHEBI:29035"/>
        <label>1</label>
    </ligand>
</feature>
<feature type="binding site" evidence="1">
    <location>
        <position position="348"/>
    </location>
    <ligand>
        <name>Mn(2+)</name>
        <dbReference type="ChEBI" id="CHEBI:29035"/>
        <label>1</label>
    </ligand>
</feature>
<feature type="binding site" evidence="1">
    <location>
        <position position="359"/>
    </location>
    <ligand>
        <name>Mn(2+)</name>
        <dbReference type="ChEBI" id="CHEBI:29035"/>
        <label>2</label>
    </ligand>
</feature>